<comment type="function">
    <text evidence="1">DNA ligase that catalyzes the formation of phosphodiester linkages between 5'-phosphoryl and 3'-hydroxyl groups in double-stranded DNA using NAD as a coenzyme and as the energy source for the reaction. It is essential for DNA replication and repair of damaged DNA.</text>
</comment>
<comment type="catalytic activity">
    <reaction evidence="1">
        <text>NAD(+) + (deoxyribonucleotide)n-3'-hydroxyl + 5'-phospho-(deoxyribonucleotide)m = (deoxyribonucleotide)n+m + AMP + beta-nicotinamide D-nucleotide.</text>
        <dbReference type="EC" id="6.5.1.2"/>
    </reaction>
</comment>
<comment type="cofactor">
    <cofactor evidence="1">
        <name>Mg(2+)</name>
        <dbReference type="ChEBI" id="CHEBI:18420"/>
    </cofactor>
    <cofactor evidence="1">
        <name>Mn(2+)</name>
        <dbReference type="ChEBI" id="CHEBI:29035"/>
    </cofactor>
</comment>
<comment type="similarity">
    <text evidence="1">Belongs to the NAD-dependent DNA ligase family. LigA subfamily.</text>
</comment>
<feature type="chain" id="PRO_0000313329" description="DNA ligase">
    <location>
        <begin position="1"/>
        <end position="672"/>
    </location>
</feature>
<feature type="domain" description="BRCT" evidence="1">
    <location>
        <begin position="592"/>
        <end position="672"/>
    </location>
</feature>
<feature type="active site" description="N6-AMP-lysine intermediate" evidence="1">
    <location>
        <position position="117"/>
    </location>
</feature>
<feature type="binding site" evidence="1">
    <location>
        <begin position="35"/>
        <end position="39"/>
    </location>
    <ligand>
        <name>NAD(+)</name>
        <dbReference type="ChEBI" id="CHEBI:57540"/>
    </ligand>
</feature>
<feature type="binding site" evidence="1">
    <location>
        <begin position="84"/>
        <end position="85"/>
    </location>
    <ligand>
        <name>NAD(+)</name>
        <dbReference type="ChEBI" id="CHEBI:57540"/>
    </ligand>
</feature>
<feature type="binding site" evidence="1">
    <location>
        <position position="115"/>
    </location>
    <ligand>
        <name>NAD(+)</name>
        <dbReference type="ChEBI" id="CHEBI:57540"/>
    </ligand>
</feature>
<feature type="binding site" evidence="1">
    <location>
        <position position="138"/>
    </location>
    <ligand>
        <name>NAD(+)</name>
        <dbReference type="ChEBI" id="CHEBI:57540"/>
    </ligand>
</feature>
<feature type="binding site" evidence="1">
    <location>
        <position position="178"/>
    </location>
    <ligand>
        <name>NAD(+)</name>
        <dbReference type="ChEBI" id="CHEBI:57540"/>
    </ligand>
</feature>
<feature type="binding site" evidence="1">
    <location>
        <position position="294"/>
    </location>
    <ligand>
        <name>NAD(+)</name>
        <dbReference type="ChEBI" id="CHEBI:57540"/>
    </ligand>
</feature>
<feature type="binding site" evidence="1">
    <location>
        <position position="318"/>
    </location>
    <ligand>
        <name>NAD(+)</name>
        <dbReference type="ChEBI" id="CHEBI:57540"/>
    </ligand>
</feature>
<feature type="binding site" evidence="1">
    <location>
        <position position="412"/>
    </location>
    <ligand>
        <name>Zn(2+)</name>
        <dbReference type="ChEBI" id="CHEBI:29105"/>
    </ligand>
</feature>
<feature type="binding site" evidence="1">
    <location>
        <position position="415"/>
    </location>
    <ligand>
        <name>Zn(2+)</name>
        <dbReference type="ChEBI" id="CHEBI:29105"/>
    </ligand>
</feature>
<feature type="binding site" evidence="1">
    <location>
        <position position="430"/>
    </location>
    <ligand>
        <name>Zn(2+)</name>
        <dbReference type="ChEBI" id="CHEBI:29105"/>
    </ligand>
</feature>
<feature type="binding site" evidence="1">
    <location>
        <position position="435"/>
    </location>
    <ligand>
        <name>Zn(2+)</name>
        <dbReference type="ChEBI" id="CHEBI:29105"/>
    </ligand>
</feature>
<protein>
    <recommendedName>
        <fullName evidence="1">DNA ligase</fullName>
        <ecNumber evidence="1">6.5.1.2</ecNumber>
    </recommendedName>
    <alternativeName>
        <fullName evidence="1">Polydeoxyribonucleotide synthase [NAD(+)]</fullName>
    </alternativeName>
</protein>
<organism>
    <name type="scientific">Myxococcus xanthus (strain DK1622)</name>
    <dbReference type="NCBI Taxonomy" id="246197"/>
    <lineage>
        <taxon>Bacteria</taxon>
        <taxon>Pseudomonadati</taxon>
        <taxon>Myxococcota</taxon>
        <taxon>Myxococcia</taxon>
        <taxon>Myxococcales</taxon>
        <taxon>Cystobacterineae</taxon>
        <taxon>Myxococcaceae</taxon>
        <taxon>Myxococcus</taxon>
    </lineage>
</organism>
<gene>
    <name evidence="1" type="primary">ligA</name>
    <name type="ordered locus">MXAN_5637</name>
</gene>
<name>DNLJ_MYXXD</name>
<keyword id="KW-0227">DNA damage</keyword>
<keyword id="KW-0234">DNA repair</keyword>
<keyword id="KW-0235">DNA replication</keyword>
<keyword id="KW-0436">Ligase</keyword>
<keyword id="KW-0460">Magnesium</keyword>
<keyword id="KW-0464">Manganese</keyword>
<keyword id="KW-0479">Metal-binding</keyword>
<keyword id="KW-0520">NAD</keyword>
<keyword id="KW-1185">Reference proteome</keyword>
<keyword id="KW-0862">Zinc</keyword>
<accession>Q1D0P7</accession>
<reference key="1">
    <citation type="journal article" date="2006" name="Proc. Natl. Acad. Sci. U.S.A.">
        <title>Evolution of sensory complexity recorded in a myxobacterial genome.</title>
        <authorList>
            <person name="Goldman B.S."/>
            <person name="Nierman W.C."/>
            <person name="Kaiser D."/>
            <person name="Slater S.C."/>
            <person name="Durkin A.S."/>
            <person name="Eisen J.A."/>
            <person name="Ronning C.M."/>
            <person name="Barbazuk W.B."/>
            <person name="Blanchard M."/>
            <person name="Field C."/>
            <person name="Halling C."/>
            <person name="Hinkle G."/>
            <person name="Iartchuk O."/>
            <person name="Kim H.S."/>
            <person name="Mackenzie C."/>
            <person name="Madupu R."/>
            <person name="Miller N."/>
            <person name="Shvartsbeyn A."/>
            <person name="Sullivan S.A."/>
            <person name="Vaudin M."/>
            <person name="Wiegand R."/>
            <person name="Kaplan H.B."/>
        </authorList>
    </citation>
    <scope>NUCLEOTIDE SEQUENCE [LARGE SCALE GENOMIC DNA]</scope>
    <source>
        <strain>DK1622</strain>
    </source>
</reference>
<dbReference type="EC" id="6.5.1.2" evidence="1"/>
<dbReference type="EMBL" id="CP000113">
    <property type="protein sequence ID" value="ABF88435.1"/>
    <property type="molecule type" value="Genomic_DNA"/>
</dbReference>
<dbReference type="RefSeq" id="WP_011555591.1">
    <property type="nucleotide sequence ID" value="NC_008095.1"/>
</dbReference>
<dbReference type="SMR" id="Q1D0P7"/>
<dbReference type="STRING" id="246197.MXAN_5637"/>
<dbReference type="EnsemblBacteria" id="ABF88435">
    <property type="protein sequence ID" value="ABF88435"/>
    <property type="gene ID" value="MXAN_5637"/>
</dbReference>
<dbReference type="GeneID" id="41362883"/>
<dbReference type="KEGG" id="mxa:MXAN_5637"/>
<dbReference type="eggNOG" id="COG0272">
    <property type="taxonomic scope" value="Bacteria"/>
</dbReference>
<dbReference type="HOGENOM" id="CLU_007764_2_1_7"/>
<dbReference type="OrthoDB" id="9759736at2"/>
<dbReference type="Proteomes" id="UP000002402">
    <property type="component" value="Chromosome"/>
</dbReference>
<dbReference type="GO" id="GO:0005829">
    <property type="term" value="C:cytosol"/>
    <property type="evidence" value="ECO:0007669"/>
    <property type="project" value="TreeGrafter"/>
</dbReference>
<dbReference type="GO" id="GO:0003677">
    <property type="term" value="F:DNA binding"/>
    <property type="evidence" value="ECO:0007669"/>
    <property type="project" value="InterPro"/>
</dbReference>
<dbReference type="GO" id="GO:0003911">
    <property type="term" value="F:DNA ligase (NAD+) activity"/>
    <property type="evidence" value="ECO:0007669"/>
    <property type="project" value="UniProtKB-UniRule"/>
</dbReference>
<dbReference type="GO" id="GO:0046872">
    <property type="term" value="F:metal ion binding"/>
    <property type="evidence" value="ECO:0007669"/>
    <property type="project" value="UniProtKB-KW"/>
</dbReference>
<dbReference type="GO" id="GO:0006281">
    <property type="term" value="P:DNA repair"/>
    <property type="evidence" value="ECO:0007669"/>
    <property type="project" value="UniProtKB-KW"/>
</dbReference>
<dbReference type="GO" id="GO:0006260">
    <property type="term" value="P:DNA replication"/>
    <property type="evidence" value="ECO:0007669"/>
    <property type="project" value="UniProtKB-KW"/>
</dbReference>
<dbReference type="CDD" id="cd17748">
    <property type="entry name" value="BRCT_DNA_ligase_like"/>
    <property type="match status" value="1"/>
</dbReference>
<dbReference type="CDD" id="cd00114">
    <property type="entry name" value="LIGANc"/>
    <property type="match status" value="1"/>
</dbReference>
<dbReference type="FunFam" id="1.10.150.20:FF:000006">
    <property type="entry name" value="DNA ligase"/>
    <property type="match status" value="1"/>
</dbReference>
<dbReference type="FunFam" id="1.10.150.20:FF:000007">
    <property type="entry name" value="DNA ligase"/>
    <property type="match status" value="1"/>
</dbReference>
<dbReference type="FunFam" id="1.10.287.610:FF:000002">
    <property type="entry name" value="DNA ligase"/>
    <property type="match status" value="1"/>
</dbReference>
<dbReference type="FunFam" id="2.40.50.140:FF:000012">
    <property type="entry name" value="DNA ligase"/>
    <property type="match status" value="1"/>
</dbReference>
<dbReference type="FunFam" id="3.30.470.30:FF:000001">
    <property type="entry name" value="DNA ligase"/>
    <property type="match status" value="1"/>
</dbReference>
<dbReference type="FunFam" id="3.40.50.10190:FF:000054">
    <property type="entry name" value="DNA ligase"/>
    <property type="match status" value="1"/>
</dbReference>
<dbReference type="Gene3D" id="6.20.10.30">
    <property type="match status" value="1"/>
</dbReference>
<dbReference type="Gene3D" id="1.10.150.20">
    <property type="entry name" value="5' to 3' exonuclease, C-terminal subdomain"/>
    <property type="match status" value="2"/>
</dbReference>
<dbReference type="Gene3D" id="3.40.50.10190">
    <property type="entry name" value="BRCT domain"/>
    <property type="match status" value="1"/>
</dbReference>
<dbReference type="Gene3D" id="3.30.470.30">
    <property type="entry name" value="DNA ligase/mRNA capping enzyme"/>
    <property type="match status" value="1"/>
</dbReference>
<dbReference type="Gene3D" id="1.10.287.610">
    <property type="entry name" value="Helix hairpin bin"/>
    <property type="match status" value="1"/>
</dbReference>
<dbReference type="Gene3D" id="2.40.50.140">
    <property type="entry name" value="Nucleic acid-binding proteins"/>
    <property type="match status" value="1"/>
</dbReference>
<dbReference type="HAMAP" id="MF_01588">
    <property type="entry name" value="DNA_ligase_A"/>
    <property type="match status" value="1"/>
</dbReference>
<dbReference type="InterPro" id="IPR001357">
    <property type="entry name" value="BRCT_dom"/>
</dbReference>
<dbReference type="InterPro" id="IPR036420">
    <property type="entry name" value="BRCT_dom_sf"/>
</dbReference>
<dbReference type="InterPro" id="IPR041663">
    <property type="entry name" value="DisA/LigA_HHH"/>
</dbReference>
<dbReference type="InterPro" id="IPR001679">
    <property type="entry name" value="DNA_ligase"/>
</dbReference>
<dbReference type="InterPro" id="IPR018239">
    <property type="entry name" value="DNA_ligase_AS"/>
</dbReference>
<dbReference type="InterPro" id="IPR033136">
    <property type="entry name" value="DNA_ligase_CS"/>
</dbReference>
<dbReference type="InterPro" id="IPR013839">
    <property type="entry name" value="DNAligase_adenylation"/>
</dbReference>
<dbReference type="InterPro" id="IPR013840">
    <property type="entry name" value="DNAligase_N"/>
</dbReference>
<dbReference type="InterPro" id="IPR003583">
    <property type="entry name" value="Hlx-hairpin-Hlx_DNA-bd_motif"/>
</dbReference>
<dbReference type="InterPro" id="IPR012340">
    <property type="entry name" value="NA-bd_OB-fold"/>
</dbReference>
<dbReference type="InterPro" id="IPR004150">
    <property type="entry name" value="NAD_DNA_ligase_OB"/>
</dbReference>
<dbReference type="InterPro" id="IPR010994">
    <property type="entry name" value="RuvA_2-like"/>
</dbReference>
<dbReference type="InterPro" id="IPR004149">
    <property type="entry name" value="Znf_DNAligase_C4"/>
</dbReference>
<dbReference type="NCBIfam" id="TIGR00575">
    <property type="entry name" value="dnlj"/>
    <property type="match status" value="1"/>
</dbReference>
<dbReference type="NCBIfam" id="NF005932">
    <property type="entry name" value="PRK07956.1"/>
    <property type="match status" value="1"/>
</dbReference>
<dbReference type="PANTHER" id="PTHR23389">
    <property type="entry name" value="CHROMOSOME TRANSMISSION FIDELITY FACTOR 18"/>
    <property type="match status" value="1"/>
</dbReference>
<dbReference type="PANTHER" id="PTHR23389:SF9">
    <property type="entry name" value="DNA LIGASE"/>
    <property type="match status" value="1"/>
</dbReference>
<dbReference type="Pfam" id="PF00533">
    <property type="entry name" value="BRCT"/>
    <property type="match status" value="1"/>
</dbReference>
<dbReference type="Pfam" id="PF01653">
    <property type="entry name" value="DNA_ligase_aden"/>
    <property type="match status" value="1"/>
</dbReference>
<dbReference type="Pfam" id="PF03120">
    <property type="entry name" value="DNA_ligase_OB"/>
    <property type="match status" value="1"/>
</dbReference>
<dbReference type="Pfam" id="PF03119">
    <property type="entry name" value="DNA_ligase_ZBD"/>
    <property type="match status" value="1"/>
</dbReference>
<dbReference type="Pfam" id="PF12826">
    <property type="entry name" value="HHH_2"/>
    <property type="match status" value="1"/>
</dbReference>
<dbReference type="Pfam" id="PF14520">
    <property type="entry name" value="HHH_5"/>
    <property type="match status" value="1"/>
</dbReference>
<dbReference type="Pfam" id="PF22745">
    <property type="entry name" value="Nlig-Ia"/>
    <property type="match status" value="1"/>
</dbReference>
<dbReference type="PIRSF" id="PIRSF001604">
    <property type="entry name" value="LigA"/>
    <property type="match status" value="1"/>
</dbReference>
<dbReference type="SMART" id="SM00292">
    <property type="entry name" value="BRCT"/>
    <property type="match status" value="1"/>
</dbReference>
<dbReference type="SMART" id="SM00278">
    <property type="entry name" value="HhH1"/>
    <property type="match status" value="4"/>
</dbReference>
<dbReference type="SMART" id="SM00532">
    <property type="entry name" value="LIGANc"/>
    <property type="match status" value="1"/>
</dbReference>
<dbReference type="SUPFAM" id="SSF52113">
    <property type="entry name" value="BRCT domain"/>
    <property type="match status" value="1"/>
</dbReference>
<dbReference type="SUPFAM" id="SSF56091">
    <property type="entry name" value="DNA ligase/mRNA capping enzyme, catalytic domain"/>
    <property type="match status" value="1"/>
</dbReference>
<dbReference type="SUPFAM" id="SSF50249">
    <property type="entry name" value="Nucleic acid-binding proteins"/>
    <property type="match status" value="1"/>
</dbReference>
<dbReference type="SUPFAM" id="SSF47781">
    <property type="entry name" value="RuvA domain 2-like"/>
    <property type="match status" value="1"/>
</dbReference>
<dbReference type="PROSITE" id="PS50172">
    <property type="entry name" value="BRCT"/>
    <property type="match status" value="1"/>
</dbReference>
<dbReference type="PROSITE" id="PS01055">
    <property type="entry name" value="DNA_LIGASE_N1"/>
    <property type="match status" value="1"/>
</dbReference>
<dbReference type="PROSITE" id="PS01056">
    <property type="entry name" value="DNA_LIGASE_N2"/>
    <property type="match status" value="1"/>
</dbReference>
<evidence type="ECO:0000255" key="1">
    <source>
        <dbReference type="HAMAP-Rule" id="MF_01588"/>
    </source>
</evidence>
<sequence>MDDFQKAAARARELHRELAHHNYRYYVLDSPEVSDAQYDKLMRELQDLEAKHPSLQTPDSPTQRVGGAAAEEFGEVVHRAPMISLANIFEDQGLTEFDERIRKLVGLPGIAYVCEPKLDGLAIALRYEKGAFVQGATRGDGTTGEDVTSNLRTIRSLPMSLFPQDDVKVPDVLEVRGEVFIRKKDFQKLNEKREEEGEPLFANPRNAAAGSLRQLDPRMTAARPLSVFLYECVPGEGVPVFKTHIEKLEYLKTLGLPINQYRRAEGLEGVRQAYDASLKGRHELPFEVDGMVVKVDDEDQRKRLGQVSKSPRWAVAYKFPPEEESTEVMDIGIQVGRTGALTPVAHLKPVKVGGVTVARATLHNEDELRRKDVRKGDTVFVRRAGDVIPEIVSVVLSKRPADSAPFEFPKHCPVCDAVATKDEDGAIIRCTGASCPAQLVEKIRHFASRLAMDIEGLGDKLAAQLVSTGRVKAFADLYALTKEDLLTLERMGDKSADNLIASLERSKQTTQRRFLYSLGIRHVGDATAKALAEAFPRSEMLFEASLEDISRVKDVGPIMAQVIHTFFQEPQNQEAIRALLAAGVQPAAPQVATGGPFVGKSVVLTGAMTGMTREQAKEEVERRGGKVAGSVSRKTDFVVAGEDAGSKLKKAQELGVRILDEQAFLQMLQTNA</sequence>
<proteinExistence type="inferred from homology"/>